<gene>
    <name evidence="1" type="primary">murB</name>
    <name type="ordered locus">MLBr02447</name>
</gene>
<comment type="function">
    <text evidence="1">Cell wall formation.</text>
</comment>
<comment type="catalytic activity">
    <reaction evidence="1">
        <text>UDP-N-acetyl-alpha-D-muramate + NADP(+) = UDP-N-acetyl-3-O-(1-carboxyvinyl)-alpha-D-glucosamine + NADPH + H(+)</text>
        <dbReference type="Rhea" id="RHEA:12248"/>
        <dbReference type="ChEBI" id="CHEBI:15378"/>
        <dbReference type="ChEBI" id="CHEBI:57783"/>
        <dbReference type="ChEBI" id="CHEBI:58349"/>
        <dbReference type="ChEBI" id="CHEBI:68483"/>
        <dbReference type="ChEBI" id="CHEBI:70757"/>
        <dbReference type="EC" id="1.3.1.98"/>
    </reaction>
</comment>
<comment type="cofactor">
    <cofactor evidence="1">
        <name>FAD</name>
        <dbReference type="ChEBI" id="CHEBI:57692"/>
    </cofactor>
</comment>
<comment type="pathway">
    <text evidence="1">Cell wall biogenesis; peptidoglycan biosynthesis.</text>
</comment>
<comment type="subcellular location">
    <subcellularLocation>
        <location evidence="1">Cytoplasm</location>
    </subcellularLocation>
</comment>
<comment type="similarity">
    <text evidence="1">Belongs to the MurB family.</text>
</comment>
<accession>B8ZT90</accession>
<organism>
    <name type="scientific">Mycobacterium leprae (strain Br4923)</name>
    <dbReference type="NCBI Taxonomy" id="561304"/>
    <lineage>
        <taxon>Bacteria</taxon>
        <taxon>Bacillati</taxon>
        <taxon>Actinomycetota</taxon>
        <taxon>Actinomycetes</taxon>
        <taxon>Mycobacteriales</taxon>
        <taxon>Mycobacteriaceae</taxon>
        <taxon>Mycobacterium</taxon>
    </lineage>
</organism>
<dbReference type="EC" id="1.3.1.98" evidence="1"/>
<dbReference type="EMBL" id="FM211192">
    <property type="protein sequence ID" value="CAR72546.1"/>
    <property type="molecule type" value="Genomic_DNA"/>
</dbReference>
<dbReference type="SMR" id="B8ZT90"/>
<dbReference type="KEGG" id="mlb:MLBr02447"/>
<dbReference type="HOGENOM" id="CLU_035304_0_1_11"/>
<dbReference type="UniPathway" id="UPA00219"/>
<dbReference type="Proteomes" id="UP000006900">
    <property type="component" value="Chromosome"/>
</dbReference>
<dbReference type="GO" id="GO:0005829">
    <property type="term" value="C:cytosol"/>
    <property type="evidence" value="ECO:0007669"/>
    <property type="project" value="TreeGrafter"/>
</dbReference>
<dbReference type="GO" id="GO:0071949">
    <property type="term" value="F:FAD binding"/>
    <property type="evidence" value="ECO:0007669"/>
    <property type="project" value="InterPro"/>
</dbReference>
<dbReference type="GO" id="GO:0008762">
    <property type="term" value="F:UDP-N-acetylmuramate dehydrogenase activity"/>
    <property type="evidence" value="ECO:0007669"/>
    <property type="project" value="UniProtKB-UniRule"/>
</dbReference>
<dbReference type="GO" id="GO:0051301">
    <property type="term" value="P:cell division"/>
    <property type="evidence" value="ECO:0007669"/>
    <property type="project" value="UniProtKB-KW"/>
</dbReference>
<dbReference type="GO" id="GO:0071555">
    <property type="term" value="P:cell wall organization"/>
    <property type="evidence" value="ECO:0007669"/>
    <property type="project" value="UniProtKB-KW"/>
</dbReference>
<dbReference type="GO" id="GO:0009252">
    <property type="term" value="P:peptidoglycan biosynthetic process"/>
    <property type="evidence" value="ECO:0007669"/>
    <property type="project" value="UniProtKB-UniRule"/>
</dbReference>
<dbReference type="GO" id="GO:0008360">
    <property type="term" value="P:regulation of cell shape"/>
    <property type="evidence" value="ECO:0007669"/>
    <property type="project" value="UniProtKB-KW"/>
</dbReference>
<dbReference type="Gene3D" id="3.30.465.10">
    <property type="match status" value="1"/>
</dbReference>
<dbReference type="Gene3D" id="3.90.78.10">
    <property type="entry name" value="UDP-N-acetylenolpyruvoylglucosamine reductase, C-terminal domain"/>
    <property type="match status" value="1"/>
</dbReference>
<dbReference type="Gene3D" id="3.30.43.10">
    <property type="entry name" value="Uridine Diphospho-n-acetylenolpyruvylglucosamine Reductase, domain 2"/>
    <property type="match status" value="1"/>
</dbReference>
<dbReference type="HAMAP" id="MF_00037">
    <property type="entry name" value="MurB"/>
    <property type="match status" value="1"/>
</dbReference>
<dbReference type="InterPro" id="IPR016166">
    <property type="entry name" value="FAD-bd_PCMH"/>
</dbReference>
<dbReference type="InterPro" id="IPR036318">
    <property type="entry name" value="FAD-bd_PCMH-like_sf"/>
</dbReference>
<dbReference type="InterPro" id="IPR016167">
    <property type="entry name" value="FAD-bd_PCMH_sub1"/>
</dbReference>
<dbReference type="InterPro" id="IPR016169">
    <property type="entry name" value="FAD-bd_PCMH_sub2"/>
</dbReference>
<dbReference type="InterPro" id="IPR003170">
    <property type="entry name" value="MurB"/>
</dbReference>
<dbReference type="InterPro" id="IPR011601">
    <property type="entry name" value="MurB_C"/>
</dbReference>
<dbReference type="InterPro" id="IPR036635">
    <property type="entry name" value="MurB_C_sf"/>
</dbReference>
<dbReference type="InterPro" id="IPR006094">
    <property type="entry name" value="Oxid_FAD_bind_N"/>
</dbReference>
<dbReference type="NCBIfam" id="TIGR00179">
    <property type="entry name" value="murB"/>
    <property type="match status" value="1"/>
</dbReference>
<dbReference type="NCBIfam" id="NF010478">
    <property type="entry name" value="PRK13903.1"/>
    <property type="match status" value="1"/>
</dbReference>
<dbReference type="PANTHER" id="PTHR21071">
    <property type="entry name" value="UDP-N-ACETYLENOLPYRUVOYLGLUCOSAMINE REDUCTASE"/>
    <property type="match status" value="1"/>
</dbReference>
<dbReference type="PANTHER" id="PTHR21071:SF4">
    <property type="entry name" value="UDP-N-ACETYLENOLPYRUVOYLGLUCOSAMINE REDUCTASE"/>
    <property type="match status" value="1"/>
</dbReference>
<dbReference type="Pfam" id="PF01565">
    <property type="entry name" value="FAD_binding_4"/>
    <property type="match status" value="1"/>
</dbReference>
<dbReference type="Pfam" id="PF02873">
    <property type="entry name" value="MurB_C"/>
    <property type="match status" value="1"/>
</dbReference>
<dbReference type="SUPFAM" id="SSF56176">
    <property type="entry name" value="FAD-binding/transporter-associated domain-like"/>
    <property type="match status" value="1"/>
</dbReference>
<dbReference type="SUPFAM" id="SSF56194">
    <property type="entry name" value="Uridine diphospho-N-Acetylenolpyruvylglucosamine reductase, MurB, C-terminal domain"/>
    <property type="match status" value="1"/>
</dbReference>
<dbReference type="PROSITE" id="PS51387">
    <property type="entry name" value="FAD_PCMH"/>
    <property type="match status" value="1"/>
</dbReference>
<feature type="chain" id="PRO_1000191434" description="UDP-N-acetylenolpyruvoylglucosamine reductase">
    <location>
        <begin position="1"/>
        <end position="367"/>
    </location>
</feature>
<feature type="domain" description="FAD-binding PCMH-type" evidence="1">
    <location>
        <begin position="29"/>
        <end position="205"/>
    </location>
</feature>
<feature type="active site" evidence="1">
    <location>
        <position position="177"/>
    </location>
</feature>
<feature type="active site" description="Proton donor" evidence="1">
    <location>
        <position position="260"/>
    </location>
</feature>
<feature type="active site" evidence="1">
    <location>
        <position position="359"/>
    </location>
</feature>
<name>MURB_MYCLB</name>
<evidence type="ECO:0000255" key="1">
    <source>
        <dbReference type="HAMAP-Rule" id="MF_00037"/>
    </source>
</evidence>
<sequence>MKRSAVGSFFAGAHVAEAVSLAPLTTLRVGPVAQRVITCASTEQVVDVIRQLDAPAGGRGAGPLLIFAGGSNLVIADTLADLTAVRLANAGITIDGNLVRAEAGAVWDDVVVRAIEHGLGGLECLSGIPGSAGATPVQNVGAYGAEVSDTITRVRLLERSSGSVRWVSACELRFGYRTSVFKQADPSGSQPPAVVLEVEFKLDASGQSAPLHYGELVATLDATSGQRANPHAVREAVLALRVRKGMVLDAADHDTWSVGSFFTNPVVAPDVYRQLAKMVDGPVPHYPAQDGVKLAAGWLVERAGFGKGYPDGAAPCRLSTKHVLALTNRGAATAEDVVTLARTVRNGVLEVFGITLEPEPALVGCVL</sequence>
<reference key="1">
    <citation type="journal article" date="2009" name="Nat. Genet.">
        <title>Comparative genomic and phylogeographic analysis of Mycobacterium leprae.</title>
        <authorList>
            <person name="Monot M."/>
            <person name="Honore N."/>
            <person name="Garnier T."/>
            <person name="Zidane N."/>
            <person name="Sherafi D."/>
            <person name="Paniz-Mondolfi A."/>
            <person name="Matsuoka M."/>
            <person name="Taylor G.M."/>
            <person name="Donoghue H.D."/>
            <person name="Bouwman A."/>
            <person name="Mays S."/>
            <person name="Watson C."/>
            <person name="Lockwood D."/>
            <person name="Khamispour A."/>
            <person name="Dowlati Y."/>
            <person name="Jianping S."/>
            <person name="Rea T.H."/>
            <person name="Vera-Cabrera L."/>
            <person name="Stefani M.M."/>
            <person name="Banu S."/>
            <person name="Macdonald M."/>
            <person name="Sapkota B.R."/>
            <person name="Spencer J.S."/>
            <person name="Thomas J."/>
            <person name="Harshman K."/>
            <person name="Singh P."/>
            <person name="Busso P."/>
            <person name="Gattiker A."/>
            <person name="Rougemont J."/>
            <person name="Brennan P.J."/>
            <person name="Cole S.T."/>
        </authorList>
    </citation>
    <scope>NUCLEOTIDE SEQUENCE [LARGE SCALE GENOMIC DNA]</scope>
    <source>
        <strain>Br4923</strain>
    </source>
</reference>
<keyword id="KW-0131">Cell cycle</keyword>
<keyword id="KW-0132">Cell division</keyword>
<keyword id="KW-0133">Cell shape</keyword>
<keyword id="KW-0961">Cell wall biogenesis/degradation</keyword>
<keyword id="KW-0963">Cytoplasm</keyword>
<keyword id="KW-0274">FAD</keyword>
<keyword id="KW-0285">Flavoprotein</keyword>
<keyword id="KW-0521">NADP</keyword>
<keyword id="KW-0560">Oxidoreductase</keyword>
<keyword id="KW-0573">Peptidoglycan synthesis</keyword>
<proteinExistence type="inferred from homology"/>
<protein>
    <recommendedName>
        <fullName evidence="1">UDP-N-acetylenolpyruvoylglucosamine reductase</fullName>
        <ecNumber evidence="1">1.3.1.98</ecNumber>
    </recommendedName>
    <alternativeName>
        <fullName evidence="1">UDP-N-acetylmuramate dehydrogenase</fullName>
    </alternativeName>
</protein>